<protein>
    <recommendedName>
        <fullName>Nucleoside diphosphate kinase</fullName>
        <shortName>NDK</shortName>
        <shortName>NDP kinase</shortName>
        <ecNumber>2.7.4.6</ecNumber>
    </recommendedName>
</protein>
<organism>
    <name type="scientific">Ginglymostoma cirratum</name>
    <name type="common">Nurse shark</name>
    <name type="synonym">Squalus cirratus</name>
    <dbReference type="NCBI Taxonomy" id="7801"/>
    <lineage>
        <taxon>Eukaryota</taxon>
        <taxon>Metazoa</taxon>
        <taxon>Chordata</taxon>
        <taxon>Craniata</taxon>
        <taxon>Vertebrata</taxon>
        <taxon>Chondrichthyes</taxon>
        <taxon>Elasmobranchii</taxon>
        <taxon>Galeomorphii</taxon>
        <taxon>Galeoidea</taxon>
        <taxon>Orectolobiformes</taxon>
        <taxon>Ginglymostomatidae</taxon>
        <taxon>Ginglymostoma</taxon>
    </lineage>
</organism>
<keyword id="KW-0067">ATP-binding</keyword>
<keyword id="KW-0418">Kinase</keyword>
<keyword id="KW-0460">Magnesium</keyword>
<keyword id="KW-0479">Metal-binding</keyword>
<keyword id="KW-0546">Nucleotide metabolism</keyword>
<keyword id="KW-0547">Nucleotide-binding</keyword>
<keyword id="KW-0597">Phosphoprotein</keyword>
<keyword id="KW-0808">Transferase</keyword>
<proteinExistence type="inferred from homology"/>
<accession>P27950</accession>
<evidence type="ECO:0000250" key="1"/>
<evidence type="ECO:0000305" key="2"/>
<name>NDK_GINCI</name>
<sequence>GNKERTFIAVKPDGVQRCIVGEVIKRFEQKGFKLVAMKFLQAPKDLLEKHYCELSDKPFYPKLIKYMSSGPVVAMVWEGLNVVKTGRVMLGETNPADSKPGTIRGDFCIQVGRNIIHGSDSVESAKKEISLWFKREELVEYQNCAQDWIYE</sequence>
<dbReference type="EC" id="2.7.4.6"/>
<dbReference type="EMBL" id="M63964">
    <property type="protein sequence ID" value="AAA49312.1"/>
    <property type="molecule type" value="Genomic_RNA"/>
</dbReference>
<dbReference type="SMR" id="P27950"/>
<dbReference type="GO" id="GO:0005524">
    <property type="term" value="F:ATP binding"/>
    <property type="evidence" value="ECO:0007669"/>
    <property type="project" value="UniProtKB-KW"/>
</dbReference>
<dbReference type="GO" id="GO:0046872">
    <property type="term" value="F:metal ion binding"/>
    <property type="evidence" value="ECO:0007669"/>
    <property type="project" value="UniProtKB-KW"/>
</dbReference>
<dbReference type="GO" id="GO:0004550">
    <property type="term" value="F:nucleoside diphosphate kinase activity"/>
    <property type="evidence" value="ECO:0007669"/>
    <property type="project" value="UniProtKB-EC"/>
</dbReference>
<dbReference type="GO" id="GO:0006241">
    <property type="term" value="P:CTP biosynthetic process"/>
    <property type="evidence" value="ECO:0007669"/>
    <property type="project" value="InterPro"/>
</dbReference>
<dbReference type="GO" id="GO:0006183">
    <property type="term" value="P:GTP biosynthetic process"/>
    <property type="evidence" value="ECO:0007669"/>
    <property type="project" value="InterPro"/>
</dbReference>
<dbReference type="GO" id="GO:0006228">
    <property type="term" value="P:UTP biosynthetic process"/>
    <property type="evidence" value="ECO:0007669"/>
    <property type="project" value="InterPro"/>
</dbReference>
<dbReference type="CDD" id="cd04413">
    <property type="entry name" value="NDPk_I"/>
    <property type="match status" value="1"/>
</dbReference>
<dbReference type="FunFam" id="3.30.70.141:FF:000039">
    <property type="entry name" value="Nucleoside diphosphate kinase B"/>
    <property type="match status" value="1"/>
</dbReference>
<dbReference type="Gene3D" id="3.30.70.141">
    <property type="entry name" value="Nucleoside diphosphate kinase-like domain"/>
    <property type="match status" value="1"/>
</dbReference>
<dbReference type="HAMAP" id="MF_00451">
    <property type="entry name" value="NDP_kinase"/>
    <property type="match status" value="1"/>
</dbReference>
<dbReference type="InterPro" id="IPR034907">
    <property type="entry name" value="NDK-like_dom"/>
</dbReference>
<dbReference type="InterPro" id="IPR036850">
    <property type="entry name" value="NDK-like_dom_sf"/>
</dbReference>
<dbReference type="InterPro" id="IPR001564">
    <property type="entry name" value="Nucleoside_diP_kinase"/>
</dbReference>
<dbReference type="InterPro" id="IPR023005">
    <property type="entry name" value="Nucleoside_diP_kinase_AS"/>
</dbReference>
<dbReference type="NCBIfam" id="NF001908">
    <property type="entry name" value="PRK00668.1"/>
    <property type="match status" value="1"/>
</dbReference>
<dbReference type="PANTHER" id="PTHR11349">
    <property type="entry name" value="NUCLEOSIDE DIPHOSPHATE KINASE"/>
    <property type="match status" value="1"/>
</dbReference>
<dbReference type="Pfam" id="PF00334">
    <property type="entry name" value="NDK"/>
    <property type="match status" value="1"/>
</dbReference>
<dbReference type="PRINTS" id="PR01243">
    <property type="entry name" value="NUCDPKINASE"/>
</dbReference>
<dbReference type="SMART" id="SM00562">
    <property type="entry name" value="NDK"/>
    <property type="match status" value="1"/>
</dbReference>
<dbReference type="SUPFAM" id="SSF54919">
    <property type="entry name" value="Nucleoside diphosphate kinase, NDK"/>
    <property type="match status" value="1"/>
</dbReference>
<dbReference type="PROSITE" id="PS00469">
    <property type="entry name" value="NDPK"/>
    <property type="match status" value="1"/>
</dbReference>
<dbReference type="PROSITE" id="PS51374">
    <property type="entry name" value="NDPK_LIKE"/>
    <property type="match status" value="1"/>
</dbReference>
<reference key="1">
    <citation type="book" date="1991" name="Evolution of the major histocompatibility complex">
        <title>Molecular cloning of nurse shark cDNAs with high sequence similarity to nucleoside diphosphate kinase genes.</title>
        <editorList>
            <person name="Klein J."/>
        </editorList>
        <authorList>
            <person name="Kasahara M."/>
            <person name="Canel C."/>
            <person name="McKinney E.C."/>
            <person name="Flajnik M.F."/>
        </authorList>
    </citation>
    <scope>NUCLEOTIDE SEQUENCE [GENOMIC RNA]</scope>
</reference>
<comment type="function">
    <text>Major role in the synthesis of nucleoside triphosphates other than ATP. The ATP gamma phosphate is transferred to the NDP beta phosphate via a ping-pong mechanism, using a phosphorylated active-site intermediate.</text>
</comment>
<comment type="catalytic activity">
    <reaction>
        <text>a 2'-deoxyribonucleoside 5'-diphosphate + ATP = a 2'-deoxyribonucleoside 5'-triphosphate + ADP</text>
        <dbReference type="Rhea" id="RHEA:44640"/>
        <dbReference type="ChEBI" id="CHEBI:30616"/>
        <dbReference type="ChEBI" id="CHEBI:61560"/>
        <dbReference type="ChEBI" id="CHEBI:73316"/>
        <dbReference type="ChEBI" id="CHEBI:456216"/>
        <dbReference type="EC" id="2.7.4.6"/>
    </reaction>
</comment>
<comment type="catalytic activity">
    <reaction>
        <text>a ribonucleoside 5'-diphosphate + ATP = a ribonucleoside 5'-triphosphate + ADP</text>
        <dbReference type="Rhea" id="RHEA:18113"/>
        <dbReference type="ChEBI" id="CHEBI:30616"/>
        <dbReference type="ChEBI" id="CHEBI:57930"/>
        <dbReference type="ChEBI" id="CHEBI:61557"/>
        <dbReference type="ChEBI" id="CHEBI:456216"/>
        <dbReference type="EC" id="2.7.4.6"/>
    </reaction>
</comment>
<comment type="cofactor">
    <cofactor evidence="1">
        <name>Mg(2+)</name>
        <dbReference type="ChEBI" id="CHEBI:18420"/>
    </cofactor>
</comment>
<comment type="subunit">
    <text evidence="1">Homohexamer.</text>
</comment>
<comment type="similarity">
    <text evidence="2">Belongs to the NDK family.</text>
</comment>
<feature type="chain" id="PRO_0000137110" description="Nucleoside diphosphate kinase">
    <location>
        <begin position="1" status="less than"/>
        <end position="151"/>
    </location>
</feature>
<feature type="active site" description="Pros-phosphohistidine intermediate" evidence="1">
    <location>
        <position position="117"/>
    </location>
</feature>
<feature type="binding site" evidence="1">
    <location>
        <position position="11"/>
    </location>
    <ligand>
        <name>ATP</name>
        <dbReference type="ChEBI" id="CHEBI:30616"/>
    </ligand>
</feature>
<feature type="binding site" evidence="1">
    <location>
        <position position="59"/>
    </location>
    <ligand>
        <name>ATP</name>
        <dbReference type="ChEBI" id="CHEBI:30616"/>
    </ligand>
</feature>
<feature type="binding site" evidence="1">
    <location>
        <position position="87"/>
    </location>
    <ligand>
        <name>ATP</name>
        <dbReference type="ChEBI" id="CHEBI:30616"/>
    </ligand>
</feature>
<feature type="binding site" evidence="1">
    <location>
        <position position="93"/>
    </location>
    <ligand>
        <name>ATP</name>
        <dbReference type="ChEBI" id="CHEBI:30616"/>
    </ligand>
</feature>
<feature type="binding site" evidence="1">
    <location>
        <position position="104"/>
    </location>
    <ligand>
        <name>ATP</name>
        <dbReference type="ChEBI" id="CHEBI:30616"/>
    </ligand>
</feature>
<feature type="binding site" evidence="1">
    <location>
        <position position="114"/>
    </location>
    <ligand>
        <name>ATP</name>
        <dbReference type="ChEBI" id="CHEBI:30616"/>
    </ligand>
</feature>
<feature type="non-terminal residue">
    <location>
        <position position="1"/>
    </location>
</feature>